<comment type="function">
    <text evidence="1">Binds to the 23S rRNA.</text>
</comment>
<comment type="similarity">
    <text evidence="1">Belongs to the bacterial ribosomal protein bL9 family.</text>
</comment>
<protein>
    <recommendedName>
        <fullName evidence="1">Large ribosomal subunit protein bL9</fullName>
    </recommendedName>
    <alternativeName>
        <fullName evidence="2">50S ribosomal protein L9</fullName>
    </alternativeName>
</protein>
<accession>B1HPK6</accession>
<gene>
    <name evidence="1" type="primary">rplI</name>
    <name type="ordered locus">Bsph_4764</name>
</gene>
<organism>
    <name type="scientific">Lysinibacillus sphaericus (strain C3-41)</name>
    <dbReference type="NCBI Taxonomy" id="444177"/>
    <lineage>
        <taxon>Bacteria</taxon>
        <taxon>Bacillati</taxon>
        <taxon>Bacillota</taxon>
        <taxon>Bacilli</taxon>
        <taxon>Bacillales</taxon>
        <taxon>Bacillaceae</taxon>
        <taxon>Lysinibacillus</taxon>
    </lineage>
</organism>
<sequence>MKVVFLKDVKGKGKKGEIKNVADGYAQNFLIKNGYAAEANAQALSQLDGQKKLEAKNAAAELAEAQALKEKLETLTVELKAKSGEGGRLFGSVSTKQIADALQKVHGIKIDKRKMTLNDGIRALGFTNVPVKLHHEVTATLKVHVTEE</sequence>
<dbReference type="EMBL" id="CP000817">
    <property type="protein sequence ID" value="ACA42208.1"/>
    <property type="molecule type" value="Genomic_DNA"/>
</dbReference>
<dbReference type="RefSeq" id="WP_012296208.1">
    <property type="nucleotide sequence ID" value="NC_010382.1"/>
</dbReference>
<dbReference type="SMR" id="B1HPK6"/>
<dbReference type="EnsemblBacteria" id="ACA42208">
    <property type="protein sequence ID" value="ACA42208"/>
    <property type="gene ID" value="Bsph_4764"/>
</dbReference>
<dbReference type="KEGG" id="lsp:Bsph_4764"/>
<dbReference type="HOGENOM" id="CLU_078938_3_2_9"/>
<dbReference type="Proteomes" id="UP000002164">
    <property type="component" value="Chromosome"/>
</dbReference>
<dbReference type="GO" id="GO:1990904">
    <property type="term" value="C:ribonucleoprotein complex"/>
    <property type="evidence" value="ECO:0007669"/>
    <property type="project" value="UniProtKB-KW"/>
</dbReference>
<dbReference type="GO" id="GO:0005840">
    <property type="term" value="C:ribosome"/>
    <property type="evidence" value="ECO:0007669"/>
    <property type="project" value="UniProtKB-KW"/>
</dbReference>
<dbReference type="GO" id="GO:0019843">
    <property type="term" value="F:rRNA binding"/>
    <property type="evidence" value="ECO:0007669"/>
    <property type="project" value="UniProtKB-UniRule"/>
</dbReference>
<dbReference type="GO" id="GO:0003735">
    <property type="term" value="F:structural constituent of ribosome"/>
    <property type="evidence" value="ECO:0007669"/>
    <property type="project" value="InterPro"/>
</dbReference>
<dbReference type="GO" id="GO:0006412">
    <property type="term" value="P:translation"/>
    <property type="evidence" value="ECO:0007669"/>
    <property type="project" value="UniProtKB-UniRule"/>
</dbReference>
<dbReference type="FunFam" id="3.10.430.100:FF:000002">
    <property type="entry name" value="50S ribosomal protein L9"/>
    <property type="match status" value="1"/>
</dbReference>
<dbReference type="FunFam" id="3.40.5.10:FF:000002">
    <property type="entry name" value="50S ribosomal protein L9"/>
    <property type="match status" value="1"/>
</dbReference>
<dbReference type="Gene3D" id="3.10.430.100">
    <property type="entry name" value="Ribosomal protein L9, C-terminal domain"/>
    <property type="match status" value="1"/>
</dbReference>
<dbReference type="Gene3D" id="3.40.5.10">
    <property type="entry name" value="Ribosomal protein L9, N-terminal domain"/>
    <property type="match status" value="1"/>
</dbReference>
<dbReference type="HAMAP" id="MF_00503">
    <property type="entry name" value="Ribosomal_bL9"/>
    <property type="match status" value="1"/>
</dbReference>
<dbReference type="InterPro" id="IPR000244">
    <property type="entry name" value="Ribosomal_bL9"/>
</dbReference>
<dbReference type="InterPro" id="IPR009027">
    <property type="entry name" value="Ribosomal_bL9/RNase_H1_N"/>
</dbReference>
<dbReference type="InterPro" id="IPR020594">
    <property type="entry name" value="Ribosomal_bL9_bac/chp"/>
</dbReference>
<dbReference type="InterPro" id="IPR020069">
    <property type="entry name" value="Ribosomal_bL9_C"/>
</dbReference>
<dbReference type="InterPro" id="IPR036791">
    <property type="entry name" value="Ribosomal_bL9_C_sf"/>
</dbReference>
<dbReference type="InterPro" id="IPR020070">
    <property type="entry name" value="Ribosomal_bL9_N"/>
</dbReference>
<dbReference type="InterPro" id="IPR036935">
    <property type="entry name" value="Ribosomal_bL9_N_sf"/>
</dbReference>
<dbReference type="NCBIfam" id="TIGR00158">
    <property type="entry name" value="L9"/>
    <property type="match status" value="1"/>
</dbReference>
<dbReference type="PANTHER" id="PTHR21368">
    <property type="entry name" value="50S RIBOSOMAL PROTEIN L9"/>
    <property type="match status" value="1"/>
</dbReference>
<dbReference type="Pfam" id="PF03948">
    <property type="entry name" value="Ribosomal_L9_C"/>
    <property type="match status" value="1"/>
</dbReference>
<dbReference type="Pfam" id="PF01281">
    <property type="entry name" value="Ribosomal_L9_N"/>
    <property type="match status" value="1"/>
</dbReference>
<dbReference type="SUPFAM" id="SSF55658">
    <property type="entry name" value="L9 N-domain-like"/>
    <property type="match status" value="1"/>
</dbReference>
<dbReference type="SUPFAM" id="SSF55653">
    <property type="entry name" value="Ribosomal protein L9 C-domain"/>
    <property type="match status" value="1"/>
</dbReference>
<dbReference type="PROSITE" id="PS00651">
    <property type="entry name" value="RIBOSOMAL_L9"/>
    <property type="match status" value="1"/>
</dbReference>
<keyword id="KW-0687">Ribonucleoprotein</keyword>
<keyword id="KW-0689">Ribosomal protein</keyword>
<keyword id="KW-0694">RNA-binding</keyword>
<keyword id="KW-0699">rRNA-binding</keyword>
<evidence type="ECO:0000255" key="1">
    <source>
        <dbReference type="HAMAP-Rule" id="MF_00503"/>
    </source>
</evidence>
<evidence type="ECO:0000305" key="2"/>
<feature type="chain" id="PRO_1000126936" description="Large ribosomal subunit protein bL9">
    <location>
        <begin position="1"/>
        <end position="148"/>
    </location>
</feature>
<name>RL9_LYSSC</name>
<reference key="1">
    <citation type="journal article" date="2008" name="J. Bacteriol.">
        <title>Complete genome sequence of the mosquitocidal bacterium Bacillus sphaericus C3-41 and comparison with those of closely related Bacillus species.</title>
        <authorList>
            <person name="Hu X."/>
            <person name="Fan W."/>
            <person name="Han B."/>
            <person name="Liu H."/>
            <person name="Zheng D."/>
            <person name="Li Q."/>
            <person name="Dong W."/>
            <person name="Yan J."/>
            <person name="Gao M."/>
            <person name="Berry C."/>
            <person name="Yuan Z."/>
        </authorList>
    </citation>
    <scope>NUCLEOTIDE SEQUENCE [LARGE SCALE GENOMIC DNA]</scope>
    <source>
        <strain>C3-41</strain>
    </source>
</reference>
<proteinExistence type="inferred from homology"/>